<name>BLAC_STRLA</name>
<evidence type="ECO:0000250" key="1"/>
<evidence type="ECO:0000255" key="2">
    <source>
        <dbReference type="PROSITE-ProRule" id="PRU00648"/>
    </source>
</evidence>
<evidence type="ECO:0000255" key="3">
    <source>
        <dbReference type="PROSITE-ProRule" id="PRU10101"/>
    </source>
</evidence>
<evidence type="ECO:0000305" key="4"/>
<evidence type="ECO:0000305" key="5">
    <source>
    </source>
</evidence>
<organism>
    <name type="scientific">Streptomyces lavendulae</name>
    <dbReference type="NCBI Taxonomy" id="1914"/>
    <lineage>
        <taxon>Bacteria</taxon>
        <taxon>Bacillati</taxon>
        <taxon>Actinomycetota</taxon>
        <taxon>Actinomycetes</taxon>
        <taxon>Kitasatosporales</taxon>
        <taxon>Streptomycetaceae</taxon>
        <taxon>Streptomyces</taxon>
    </lineage>
</organism>
<accession>P35393</accession>
<sequence length="305" mass="32354">MGTTGARPSRRAVLTAAAGAAVAGIPLGGSTAFAAPRGNPDVLRQLRALEQEHSARLGVYARDTATGRTVLHRAEERFPMCSVFKTLAVAAVLRDLDRDGEFLATRLFYTEQEVKDSGFGPVTGLPENLAAGMTVERLCAAAICQSDNAAANLLLRELGGPEAVTRFCRSVGDRTTRLDRWEPELNSAEPGRLTDTTTPRAIGATYGELVLGDALAPRDRERLTGWLLANTTSTERFRKGLPADWTLGDKTGGGAYGTNNDAGVTWPPHRPPVVMVVLTTHDRPDAVADNPLVAKTAALLASALG</sequence>
<proteinExistence type="inferred from homology"/>
<protein>
    <recommendedName>
        <fullName>Beta-lactamase</fullName>
        <ecNumber>3.5.2.6</ecNumber>
    </recommendedName>
    <alternativeName>
        <fullName>Penicillinase</fullName>
    </alternativeName>
</protein>
<reference key="1">
    <citation type="journal article" date="1990" name="J. Gen. Microbiol.">
        <title>Molecular analysis of beta-lactamases from four species of Streptomyces: comparison of amino acid sequences with those of other beta-lactamases.</title>
        <authorList>
            <person name="Forsman M."/>
            <person name="Haeggstroem B."/>
            <person name="Lindgren L."/>
            <person name="Jaurin B."/>
        </authorList>
    </citation>
    <scope>NUCLEOTIDE SEQUENCE [GENOMIC DNA]</scope>
    <source>
        <strain>ATCC 8664 / DSM 40213 / JCM 4055 / KCC S-0055 / NBRC 12789 / NCIMB 9840</strain>
    </source>
</reference>
<reference key="2">
    <citation type="journal article" date="1991" name="Biochem. J.">
        <title>A standard numbering scheme for the class A beta-lactamases.</title>
        <authorList>
            <person name="Ambler R.P."/>
            <person name="Coulson A.F."/>
            <person name="Frere J.M."/>
            <person name="Ghuysen J.M."/>
            <person name="Joris B."/>
            <person name="Forsman M."/>
            <person name="Levesque R.C."/>
            <person name="Tiraby G."/>
            <person name="Waley S.G."/>
        </authorList>
    </citation>
    <scope>AMINO ACID NUMBERING SCHEME</scope>
</reference>
<keyword id="KW-0046">Antibiotic resistance</keyword>
<keyword id="KW-0378">Hydrolase</keyword>
<keyword id="KW-0732">Signal</keyword>
<feature type="signal peptide" description="Tat-type signal" evidence="2">
    <location>
        <begin position="1"/>
        <end position="34"/>
    </location>
</feature>
<feature type="chain" id="PRO_0000017019" description="Beta-lactamase">
    <location>
        <begin position="35"/>
        <end position="305"/>
    </location>
</feature>
<feature type="active site" description="Acyl-ester intermediate" evidence="3">
    <location>
        <position position="82"/>
    </location>
</feature>
<feature type="binding site" evidence="1">
    <location>
        <begin position="250"/>
        <end position="252"/>
    </location>
    <ligand>
        <name>substrate</name>
    </ligand>
</feature>
<dbReference type="EC" id="3.5.2.6"/>
<dbReference type="EMBL" id="M34180">
    <property type="protein sequence ID" value="AAA26708.1"/>
    <property type="molecule type" value="Genomic_DNA"/>
</dbReference>
<dbReference type="PIR" id="C45822">
    <property type="entry name" value="C45822"/>
</dbReference>
<dbReference type="SMR" id="P35393"/>
<dbReference type="GO" id="GO:0008800">
    <property type="term" value="F:beta-lactamase activity"/>
    <property type="evidence" value="ECO:0007669"/>
    <property type="project" value="UniProtKB-EC"/>
</dbReference>
<dbReference type="GO" id="GO:0030655">
    <property type="term" value="P:beta-lactam antibiotic catabolic process"/>
    <property type="evidence" value="ECO:0007669"/>
    <property type="project" value="InterPro"/>
</dbReference>
<dbReference type="GO" id="GO:0046677">
    <property type="term" value="P:response to antibiotic"/>
    <property type="evidence" value="ECO:0007669"/>
    <property type="project" value="UniProtKB-KW"/>
</dbReference>
<dbReference type="Gene3D" id="3.40.710.10">
    <property type="entry name" value="DD-peptidase/beta-lactamase superfamily"/>
    <property type="match status" value="1"/>
</dbReference>
<dbReference type="InterPro" id="IPR012338">
    <property type="entry name" value="Beta-lactam/transpept-like"/>
</dbReference>
<dbReference type="InterPro" id="IPR045155">
    <property type="entry name" value="Beta-lactam_cat"/>
</dbReference>
<dbReference type="InterPro" id="IPR000871">
    <property type="entry name" value="Beta-lactam_class-A"/>
</dbReference>
<dbReference type="InterPro" id="IPR023650">
    <property type="entry name" value="Beta-lactam_class-A_AS"/>
</dbReference>
<dbReference type="InterPro" id="IPR006311">
    <property type="entry name" value="TAT_signal"/>
</dbReference>
<dbReference type="NCBIfam" id="NF033103">
    <property type="entry name" value="bla_class_A"/>
    <property type="match status" value="1"/>
</dbReference>
<dbReference type="PANTHER" id="PTHR35333">
    <property type="entry name" value="BETA-LACTAMASE"/>
    <property type="match status" value="1"/>
</dbReference>
<dbReference type="PANTHER" id="PTHR35333:SF3">
    <property type="entry name" value="BETA-LACTAMASE-TYPE TRANSPEPTIDASE FOLD CONTAINING PROTEIN"/>
    <property type="match status" value="1"/>
</dbReference>
<dbReference type="Pfam" id="PF13354">
    <property type="entry name" value="Beta-lactamase2"/>
    <property type="match status" value="1"/>
</dbReference>
<dbReference type="PRINTS" id="PR00118">
    <property type="entry name" value="BLACTAMASEA"/>
</dbReference>
<dbReference type="SUPFAM" id="SSF56601">
    <property type="entry name" value="beta-lactamase/transpeptidase-like"/>
    <property type="match status" value="1"/>
</dbReference>
<dbReference type="PROSITE" id="PS00146">
    <property type="entry name" value="BETA_LACTAMASE_A"/>
    <property type="match status" value="1"/>
</dbReference>
<dbReference type="PROSITE" id="PS51318">
    <property type="entry name" value="TAT"/>
    <property type="match status" value="1"/>
</dbReference>
<comment type="catalytic activity">
    <reaction evidence="3">
        <text>a beta-lactam + H2O = a substituted beta-amino acid</text>
        <dbReference type="Rhea" id="RHEA:20401"/>
        <dbReference type="ChEBI" id="CHEBI:15377"/>
        <dbReference type="ChEBI" id="CHEBI:35627"/>
        <dbReference type="ChEBI" id="CHEBI:140347"/>
        <dbReference type="EC" id="3.5.2.6"/>
    </reaction>
</comment>
<comment type="PTM">
    <text>Predicted to be exported by the Tat system. The position of the signal peptide cleavage has not been experimentally proven.</text>
</comment>
<comment type="miscellaneous">
    <text evidence="5">The class A beta-lactamase family has a specific amino-acid numbering system, sometimes called Ambler or ABL numbering and often misspelt as Amber. A multiple sequence alignment was used to derive a consensus sequence and then the consensus was numbered taking into account insertions and deletions. This allows use of identical numbers, e.g. for active site residues, despite differences in protein length. UniProt always uses natural numbering of residues, hence there appear to be differences in numbering between this entry and some papers.</text>
</comment>
<comment type="similarity">
    <text evidence="4">Belongs to the class-A beta-lactamase family.</text>
</comment>